<name>YNFA_ECO5E</name>
<dbReference type="EMBL" id="CP001164">
    <property type="protein sequence ID" value="ACI36074.1"/>
    <property type="molecule type" value="Genomic_DNA"/>
</dbReference>
<dbReference type="RefSeq" id="WP_001302046.1">
    <property type="nucleotide sequence ID" value="NC_011353.1"/>
</dbReference>
<dbReference type="SMR" id="B5Z364"/>
<dbReference type="KEGG" id="ecf:ECH74115_2291"/>
<dbReference type="HOGENOM" id="CLU_117653_2_1_6"/>
<dbReference type="GO" id="GO:0005886">
    <property type="term" value="C:plasma membrane"/>
    <property type="evidence" value="ECO:0007669"/>
    <property type="project" value="UniProtKB-SubCell"/>
</dbReference>
<dbReference type="HAMAP" id="MF_00010">
    <property type="entry name" value="UPF0060"/>
    <property type="match status" value="1"/>
</dbReference>
<dbReference type="InterPro" id="IPR003844">
    <property type="entry name" value="UPF0060"/>
</dbReference>
<dbReference type="NCBIfam" id="NF002586">
    <property type="entry name" value="PRK02237.1"/>
    <property type="match status" value="1"/>
</dbReference>
<dbReference type="PANTHER" id="PTHR36116">
    <property type="entry name" value="UPF0060 MEMBRANE PROTEIN YNFA"/>
    <property type="match status" value="1"/>
</dbReference>
<dbReference type="PANTHER" id="PTHR36116:SF1">
    <property type="entry name" value="UPF0060 MEMBRANE PROTEIN YNFA"/>
    <property type="match status" value="1"/>
</dbReference>
<dbReference type="Pfam" id="PF02694">
    <property type="entry name" value="UPF0060"/>
    <property type="match status" value="1"/>
</dbReference>
<dbReference type="SUPFAM" id="SSF103481">
    <property type="entry name" value="Multidrug resistance efflux transporter EmrE"/>
    <property type="match status" value="1"/>
</dbReference>
<protein>
    <recommendedName>
        <fullName evidence="1">UPF0060 membrane protein YnfA</fullName>
    </recommendedName>
</protein>
<comment type="subcellular location">
    <subcellularLocation>
        <location evidence="1">Cell inner membrane</location>
        <topology evidence="1">Multi-pass membrane protein</topology>
    </subcellularLocation>
</comment>
<comment type="similarity">
    <text evidence="1">Belongs to the UPF0060 family.</text>
</comment>
<reference key="1">
    <citation type="journal article" date="2011" name="Proc. Natl. Acad. Sci. U.S.A.">
        <title>Genomic anatomy of Escherichia coli O157:H7 outbreaks.</title>
        <authorList>
            <person name="Eppinger M."/>
            <person name="Mammel M.K."/>
            <person name="Leclerc J.E."/>
            <person name="Ravel J."/>
            <person name="Cebula T.A."/>
        </authorList>
    </citation>
    <scope>NUCLEOTIDE SEQUENCE [LARGE SCALE GENOMIC DNA]</scope>
    <source>
        <strain>EC4115 / EHEC</strain>
    </source>
</reference>
<sequence>MIKTTLLFFATALCEIIGCFLPWLWLKRNASIWLLLPAGISLALFVWLLTLHPAASGRVYAAYGGVYVCTALMWLRVVDGVKLTLYDWTGPLIALCGMLIIVVGWGRT</sequence>
<keyword id="KW-0997">Cell inner membrane</keyword>
<keyword id="KW-1003">Cell membrane</keyword>
<keyword id="KW-0472">Membrane</keyword>
<keyword id="KW-0812">Transmembrane</keyword>
<keyword id="KW-1133">Transmembrane helix</keyword>
<proteinExistence type="inferred from homology"/>
<feature type="chain" id="PRO_1000089241" description="UPF0060 membrane protein YnfA">
    <location>
        <begin position="1"/>
        <end position="108"/>
    </location>
</feature>
<feature type="topological domain" description="Periplasmic" evidence="1">
    <location>
        <begin position="1"/>
        <end position="5"/>
    </location>
</feature>
<feature type="transmembrane region" description="Helical" evidence="1">
    <location>
        <begin position="6"/>
        <end position="26"/>
    </location>
</feature>
<feature type="topological domain" description="Cytoplasmic" evidence="1">
    <location>
        <begin position="27"/>
        <end position="30"/>
    </location>
</feature>
<feature type="transmembrane region" description="Helical" evidence="1">
    <location>
        <begin position="31"/>
        <end position="51"/>
    </location>
</feature>
<feature type="topological domain" description="Periplasmic" evidence="1">
    <location>
        <begin position="52"/>
        <end position="60"/>
    </location>
</feature>
<feature type="transmembrane region" description="Helical" evidence="1">
    <location>
        <begin position="61"/>
        <end position="81"/>
    </location>
</feature>
<feature type="topological domain" description="Cytoplasmic" evidence="1">
    <location>
        <begin position="82"/>
        <end position="84"/>
    </location>
</feature>
<feature type="transmembrane region" description="Helical" evidence="1">
    <location>
        <begin position="85"/>
        <end position="105"/>
    </location>
</feature>
<feature type="topological domain" description="Periplasmic" evidence="1">
    <location>
        <begin position="106"/>
        <end position="108"/>
    </location>
</feature>
<evidence type="ECO:0000255" key="1">
    <source>
        <dbReference type="HAMAP-Rule" id="MF_00010"/>
    </source>
</evidence>
<organism>
    <name type="scientific">Escherichia coli O157:H7 (strain EC4115 / EHEC)</name>
    <dbReference type="NCBI Taxonomy" id="444450"/>
    <lineage>
        <taxon>Bacteria</taxon>
        <taxon>Pseudomonadati</taxon>
        <taxon>Pseudomonadota</taxon>
        <taxon>Gammaproteobacteria</taxon>
        <taxon>Enterobacterales</taxon>
        <taxon>Enterobacteriaceae</taxon>
        <taxon>Escherichia</taxon>
    </lineage>
</organism>
<accession>B5Z364</accession>
<gene>
    <name evidence="1" type="primary">ynfA</name>
    <name type="ordered locus">ECH74115_2291</name>
</gene>